<accession>P59305</accession>
<feature type="chain" id="PRO_0000112387" description="N-acetyl-gamma-glutamyl-phosphate reductase">
    <location>
        <begin position="1"/>
        <end position="364"/>
    </location>
</feature>
<feature type="active site" evidence="1">
    <location>
        <position position="157"/>
    </location>
</feature>
<protein>
    <recommendedName>
        <fullName evidence="1">N-acetyl-gamma-glutamyl-phosphate reductase</fullName>
        <shortName evidence="1">AGPR</shortName>
        <ecNumber evidence="1">1.2.1.38</ecNumber>
    </recommendedName>
    <alternativeName>
        <fullName evidence="1">N-acetyl-glutamate semialdehyde dehydrogenase</fullName>
        <shortName evidence="1">NAGSA dehydrogenase</shortName>
    </alternativeName>
</protein>
<organism>
    <name type="scientific">Bifidobacterium longum (strain NCC 2705)</name>
    <dbReference type="NCBI Taxonomy" id="206672"/>
    <lineage>
        <taxon>Bacteria</taxon>
        <taxon>Bacillati</taxon>
        <taxon>Actinomycetota</taxon>
        <taxon>Actinomycetes</taxon>
        <taxon>Bifidobacteriales</taxon>
        <taxon>Bifidobacteriaceae</taxon>
        <taxon>Bifidobacterium</taxon>
    </lineage>
</organism>
<evidence type="ECO:0000255" key="1">
    <source>
        <dbReference type="HAMAP-Rule" id="MF_00150"/>
    </source>
</evidence>
<proteinExistence type="inferred from homology"/>
<sequence>MAKYTVAVAGATGYAGGEALRILAAHPDFDITCVAGHSSVGESMAKHMPHIPQLANLVVEDTAPEVLNGHDVIILALPHGASGKLASQLDPNAVVVDLGADHRLEEQAAWDEFYGGDFYEHWTYGMPELITGKAADGSYTRQRAALPGTKRIAGPGCNVTATTLALQPGIAEGLVESQDIVADLVVGYSGAGKNLKRTNLLAAEALQSALPYSVGGKHRHIPEILQNFAHAAGKSAAEASEFTLGFTPILAPMSRGILATVSARMTDKAKTLSDEEIRAVWSKAYEGQDFMVLLPEGTLPATGNIIGSNAAHLQVVTDRKAGRIYAFAAIDNLNRGTAGQAVQSLNIALGLPEDAGLTKIGVAP</sequence>
<gene>
    <name evidence="1" type="primary">argC</name>
    <name type="ordered locus">BL1064</name>
</gene>
<comment type="function">
    <text evidence="1">Catalyzes the NADPH-dependent reduction of N-acetyl-5-glutamyl phosphate to yield N-acetyl-L-glutamate 5-semialdehyde.</text>
</comment>
<comment type="catalytic activity">
    <reaction evidence="1">
        <text>N-acetyl-L-glutamate 5-semialdehyde + phosphate + NADP(+) = N-acetyl-L-glutamyl 5-phosphate + NADPH + H(+)</text>
        <dbReference type="Rhea" id="RHEA:21588"/>
        <dbReference type="ChEBI" id="CHEBI:15378"/>
        <dbReference type="ChEBI" id="CHEBI:29123"/>
        <dbReference type="ChEBI" id="CHEBI:43474"/>
        <dbReference type="ChEBI" id="CHEBI:57783"/>
        <dbReference type="ChEBI" id="CHEBI:57936"/>
        <dbReference type="ChEBI" id="CHEBI:58349"/>
        <dbReference type="EC" id="1.2.1.38"/>
    </reaction>
</comment>
<comment type="pathway">
    <text evidence="1">Amino-acid biosynthesis; L-arginine biosynthesis; N(2)-acetyl-L-ornithine from L-glutamate: step 3/4.</text>
</comment>
<comment type="subcellular location">
    <subcellularLocation>
        <location evidence="1">Cytoplasm</location>
    </subcellularLocation>
</comment>
<comment type="similarity">
    <text evidence="1">Belongs to the NAGSA dehydrogenase family. Type 1 subfamily.</text>
</comment>
<reference key="1">
    <citation type="journal article" date="2002" name="Proc. Natl. Acad. Sci. U.S.A.">
        <title>The genome sequence of Bifidobacterium longum reflects its adaptation to the human gastrointestinal tract.</title>
        <authorList>
            <person name="Schell M.A."/>
            <person name="Karmirantzou M."/>
            <person name="Snel B."/>
            <person name="Vilanova D."/>
            <person name="Berger B."/>
            <person name="Pessi G."/>
            <person name="Zwahlen M.-C."/>
            <person name="Desiere F."/>
            <person name="Bork P."/>
            <person name="Delley M."/>
            <person name="Pridmore R.D."/>
            <person name="Arigoni F."/>
        </authorList>
    </citation>
    <scope>NUCLEOTIDE SEQUENCE [LARGE SCALE GENOMIC DNA]</scope>
    <source>
        <strain>NCC 2705</strain>
    </source>
</reference>
<dbReference type="EC" id="1.2.1.38" evidence="1"/>
<dbReference type="EMBL" id="AE014295">
    <property type="protein sequence ID" value="AAN24872.1"/>
    <property type="molecule type" value="Genomic_DNA"/>
</dbReference>
<dbReference type="RefSeq" id="NP_696236.1">
    <property type="nucleotide sequence ID" value="NC_004307.2"/>
</dbReference>
<dbReference type="RefSeq" id="WP_011068279.1">
    <property type="nucleotide sequence ID" value="NC_004307.2"/>
</dbReference>
<dbReference type="SMR" id="P59305"/>
<dbReference type="STRING" id="206672.BL1064"/>
<dbReference type="EnsemblBacteria" id="AAN24872">
    <property type="protein sequence ID" value="AAN24872"/>
    <property type="gene ID" value="BL1064"/>
</dbReference>
<dbReference type="KEGG" id="blo:BL1064"/>
<dbReference type="PATRIC" id="fig|206672.9.peg.771"/>
<dbReference type="HOGENOM" id="CLU_006384_0_0_11"/>
<dbReference type="OrthoDB" id="9801289at2"/>
<dbReference type="PhylomeDB" id="P59305"/>
<dbReference type="UniPathway" id="UPA00068">
    <property type="reaction ID" value="UER00108"/>
</dbReference>
<dbReference type="Proteomes" id="UP000000439">
    <property type="component" value="Chromosome"/>
</dbReference>
<dbReference type="GO" id="GO:0005737">
    <property type="term" value="C:cytoplasm"/>
    <property type="evidence" value="ECO:0007669"/>
    <property type="project" value="UniProtKB-SubCell"/>
</dbReference>
<dbReference type="GO" id="GO:0003942">
    <property type="term" value="F:N-acetyl-gamma-glutamyl-phosphate reductase activity"/>
    <property type="evidence" value="ECO:0007669"/>
    <property type="project" value="UniProtKB-UniRule"/>
</dbReference>
<dbReference type="GO" id="GO:0051287">
    <property type="term" value="F:NAD binding"/>
    <property type="evidence" value="ECO:0007669"/>
    <property type="project" value="InterPro"/>
</dbReference>
<dbReference type="GO" id="GO:0070401">
    <property type="term" value="F:NADP+ binding"/>
    <property type="evidence" value="ECO:0007669"/>
    <property type="project" value="InterPro"/>
</dbReference>
<dbReference type="GO" id="GO:0006526">
    <property type="term" value="P:L-arginine biosynthetic process"/>
    <property type="evidence" value="ECO:0007669"/>
    <property type="project" value="UniProtKB-UniRule"/>
</dbReference>
<dbReference type="CDD" id="cd24148">
    <property type="entry name" value="AGPR_1_actinobacAGPR_like"/>
    <property type="match status" value="1"/>
</dbReference>
<dbReference type="CDD" id="cd23934">
    <property type="entry name" value="AGPR_1_C"/>
    <property type="match status" value="1"/>
</dbReference>
<dbReference type="Gene3D" id="3.30.360.10">
    <property type="entry name" value="Dihydrodipicolinate Reductase, domain 2"/>
    <property type="match status" value="1"/>
</dbReference>
<dbReference type="Gene3D" id="3.40.50.720">
    <property type="entry name" value="NAD(P)-binding Rossmann-like Domain"/>
    <property type="match status" value="1"/>
</dbReference>
<dbReference type="HAMAP" id="MF_00150">
    <property type="entry name" value="ArgC_type1"/>
    <property type="match status" value="1"/>
</dbReference>
<dbReference type="InterPro" id="IPR023013">
    <property type="entry name" value="AGPR_AS"/>
</dbReference>
<dbReference type="InterPro" id="IPR000706">
    <property type="entry name" value="AGPR_type-1"/>
</dbReference>
<dbReference type="InterPro" id="IPR036291">
    <property type="entry name" value="NAD(P)-bd_dom_sf"/>
</dbReference>
<dbReference type="InterPro" id="IPR050085">
    <property type="entry name" value="NAGSA_dehydrogenase"/>
</dbReference>
<dbReference type="InterPro" id="IPR000534">
    <property type="entry name" value="Semialdehyde_DH_NAD-bd"/>
</dbReference>
<dbReference type="NCBIfam" id="TIGR01850">
    <property type="entry name" value="argC"/>
    <property type="match status" value="1"/>
</dbReference>
<dbReference type="PANTHER" id="PTHR32338:SF10">
    <property type="entry name" value="N-ACETYL-GAMMA-GLUTAMYL-PHOSPHATE REDUCTASE, CHLOROPLASTIC-RELATED"/>
    <property type="match status" value="1"/>
</dbReference>
<dbReference type="PANTHER" id="PTHR32338">
    <property type="entry name" value="N-ACETYL-GAMMA-GLUTAMYL-PHOSPHATE REDUCTASE, CHLOROPLASTIC-RELATED-RELATED"/>
    <property type="match status" value="1"/>
</dbReference>
<dbReference type="Pfam" id="PF01118">
    <property type="entry name" value="Semialdhyde_dh"/>
    <property type="match status" value="1"/>
</dbReference>
<dbReference type="Pfam" id="PF22698">
    <property type="entry name" value="Semialdhyde_dhC_1"/>
    <property type="match status" value="1"/>
</dbReference>
<dbReference type="SMART" id="SM00859">
    <property type="entry name" value="Semialdhyde_dh"/>
    <property type="match status" value="1"/>
</dbReference>
<dbReference type="SUPFAM" id="SSF55347">
    <property type="entry name" value="Glyceraldehyde-3-phosphate dehydrogenase-like, C-terminal domain"/>
    <property type="match status" value="1"/>
</dbReference>
<dbReference type="SUPFAM" id="SSF51735">
    <property type="entry name" value="NAD(P)-binding Rossmann-fold domains"/>
    <property type="match status" value="1"/>
</dbReference>
<dbReference type="PROSITE" id="PS01224">
    <property type="entry name" value="ARGC"/>
    <property type="match status" value="1"/>
</dbReference>
<name>ARGC_BIFLO</name>
<keyword id="KW-0028">Amino-acid biosynthesis</keyword>
<keyword id="KW-0055">Arginine biosynthesis</keyword>
<keyword id="KW-0963">Cytoplasm</keyword>
<keyword id="KW-0521">NADP</keyword>
<keyword id="KW-0560">Oxidoreductase</keyword>
<keyword id="KW-1185">Reference proteome</keyword>